<name>DNAG_THEVO</name>
<keyword id="KW-0235">DNA replication</keyword>
<keyword id="KW-0240">DNA-directed RNA polymerase</keyword>
<keyword id="KW-0271">Exosome</keyword>
<keyword id="KW-0460">Magnesium</keyword>
<keyword id="KW-0479">Metal-binding</keyword>
<keyword id="KW-0548">Nucleotidyltransferase</keyword>
<keyword id="KW-0639">Primosome</keyword>
<keyword id="KW-0804">Transcription</keyword>
<keyword id="KW-0808">Transferase</keyword>
<accession>Q97CE5</accession>
<sequence>MVMLISLSLKKVIWMNVDPNLTKYMIKAKIYTDGVVEKPDVVGAIFGQTEGLLGDDLDLRDLQKSGKIGRIEVEIDSKKGRTEGYALIPSGLDQVETAILAAALETIDRIGPCKAKVEIANVEDVRVQKRQKIIERAKKIYQDMNSKGDDLSESLVKSVREEVEKSEIISYGEEKLPAGPAINDSDSIIVVEGRNDVLNLLKYGIKNTIAVQGTNIPETVKKLSKERTVTVFLDGDRGGDLILKEMLQVAEVDFVARAPPGTEVEELTYKQIVKALRYKTPIDQYLSMHGMNDELKEYSQRNNLVFTNHNSEQKKEVLEEPEAEKNEVLEQGEVTQQVSVPKEGYLDLLNPHDVSRRIEALSQLKTTEIYDSNGQRIASFPVAEAVDRIIQDPQGNTIVTGGIISQRLIDVAYNAGIKNIYGLKLGHITKKPVDINVIAWDRST</sequence>
<proteinExistence type="inferred from homology"/>
<feature type="chain" id="PRO_0000240469" description="DNA primase DnaG">
    <location>
        <begin position="1"/>
        <end position="444"/>
    </location>
</feature>
<feature type="domain" description="Toprim" evidence="1">
    <location>
        <begin position="186"/>
        <end position="260"/>
    </location>
</feature>
<feature type="binding site" evidence="1">
    <location>
        <position position="192"/>
    </location>
    <ligand>
        <name>Mg(2+)</name>
        <dbReference type="ChEBI" id="CHEBI:18420"/>
        <label>1</label>
        <note>catalytic</note>
    </ligand>
</feature>
<feature type="binding site" evidence="1">
    <location>
        <position position="234"/>
    </location>
    <ligand>
        <name>Mg(2+)</name>
        <dbReference type="ChEBI" id="CHEBI:18420"/>
        <label>1</label>
        <note>catalytic</note>
    </ligand>
</feature>
<feature type="binding site" evidence="1">
    <location>
        <position position="234"/>
    </location>
    <ligand>
        <name>Mg(2+)</name>
        <dbReference type="ChEBI" id="CHEBI:18420"/>
        <label>2</label>
    </ligand>
</feature>
<feature type="binding site" evidence="1">
    <location>
        <position position="236"/>
    </location>
    <ligand>
        <name>Mg(2+)</name>
        <dbReference type="ChEBI" id="CHEBI:18420"/>
        <label>2</label>
    </ligand>
</feature>
<reference key="1">
    <citation type="journal article" date="2000" name="Proc. Natl. Acad. Sci. U.S.A.">
        <title>Archaeal adaptation to higher temperatures revealed by genomic sequence of Thermoplasma volcanium.</title>
        <authorList>
            <person name="Kawashima T."/>
            <person name="Amano N."/>
            <person name="Koike H."/>
            <person name="Makino S."/>
            <person name="Higuchi S."/>
            <person name="Kawashima-Ohya Y."/>
            <person name="Watanabe K."/>
            <person name="Yamazaki M."/>
            <person name="Kanehori K."/>
            <person name="Kawamoto T."/>
            <person name="Nunoshiba T."/>
            <person name="Yamamoto Y."/>
            <person name="Aramaki H."/>
            <person name="Makino K."/>
            <person name="Suzuki M."/>
        </authorList>
    </citation>
    <scope>NUCLEOTIDE SEQUENCE [LARGE SCALE GENOMIC DNA]</scope>
    <source>
        <strain>ATCC 51530 / DSM 4299 / JCM 9571 / NBRC 15438 / GSS1</strain>
    </source>
</reference>
<gene>
    <name evidence="1" type="primary">dnaG</name>
    <name type="ordered locus">TV0157</name>
    <name type="ORF">TVG0167197</name>
</gene>
<dbReference type="EC" id="2.7.7.101" evidence="1"/>
<dbReference type="EMBL" id="BA000011">
    <property type="protein sequence ID" value="BAB59299.1"/>
    <property type="molecule type" value="Genomic_DNA"/>
</dbReference>
<dbReference type="SMR" id="Q97CE5"/>
<dbReference type="STRING" id="273116.gene:9380927"/>
<dbReference type="PaxDb" id="273116-14324371"/>
<dbReference type="KEGG" id="tvo:TVG0167197"/>
<dbReference type="eggNOG" id="arCOG04281">
    <property type="taxonomic scope" value="Archaea"/>
</dbReference>
<dbReference type="HOGENOM" id="CLU_034626_0_0_2"/>
<dbReference type="PhylomeDB" id="Q97CE5"/>
<dbReference type="Proteomes" id="UP000001017">
    <property type="component" value="Chromosome"/>
</dbReference>
<dbReference type="GO" id="GO:0005737">
    <property type="term" value="C:cytoplasm"/>
    <property type="evidence" value="ECO:0007669"/>
    <property type="project" value="TreeGrafter"/>
</dbReference>
<dbReference type="GO" id="GO:0000428">
    <property type="term" value="C:DNA-directed RNA polymerase complex"/>
    <property type="evidence" value="ECO:0007669"/>
    <property type="project" value="UniProtKB-KW"/>
</dbReference>
<dbReference type="GO" id="GO:0000178">
    <property type="term" value="C:exosome (RNase complex)"/>
    <property type="evidence" value="ECO:0007669"/>
    <property type="project" value="UniProtKB-KW"/>
</dbReference>
<dbReference type="GO" id="GO:1990077">
    <property type="term" value="C:primosome complex"/>
    <property type="evidence" value="ECO:0007669"/>
    <property type="project" value="UniProtKB-KW"/>
</dbReference>
<dbReference type="GO" id="GO:0003899">
    <property type="term" value="F:DNA-directed RNA polymerase activity"/>
    <property type="evidence" value="ECO:0007669"/>
    <property type="project" value="InterPro"/>
</dbReference>
<dbReference type="GO" id="GO:0046872">
    <property type="term" value="F:metal ion binding"/>
    <property type="evidence" value="ECO:0007669"/>
    <property type="project" value="UniProtKB-KW"/>
</dbReference>
<dbReference type="GO" id="GO:0008143">
    <property type="term" value="F:poly(A) binding"/>
    <property type="evidence" value="ECO:0007669"/>
    <property type="project" value="InterPro"/>
</dbReference>
<dbReference type="GO" id="GO:0006269">
    <property type="term" value="P:DNA replication, synthesis of primer"/>
    <property type="evidence" value="ECO:0007669"/>
    <property type="project" value="UniProtKB-UniRule"/>
</dbReference>
<dbReference type="CDD" id="cd01029">
    <property type="entry name" value="TOPRIM_primases"/>
    <property type="match status" value="1"/>
</dbReference>
<dbReference type="FunFam" id="3.40.1360.10:FF:000010">
    <property type="entry name" value="DNA primase DnaG"/>
    <property type="match status" value="1"/>
</dbReference>
<dbReference type="Gene3D" id="3.40.1360.10">
    <property type="match status" value="1"/>
</dbReference>
<dbReference type="HAMAP" id="MF_00007">
    <property type="entry name" value="DNA_primase_DnaG_arc"/>
    <property type="match status" value="1"/>
</dbReference>
<dbReference type="InterPro" id="IPR050219">
    <property type="entry name" value="DnaG_primase"/>
</dbReference>
<dbReference type="InterPro" id="IPR020607">
    <property type="entry name" value="Primase_DnaG_arc"/>
</dbReference>
<dbReference type="InterPro" id="IPR034154">
    <property type="entry name" value="TOPRIM_DnaG/twinkle"/>
</dbReference>
<dbReference type="InterPro" id="IPR006171">
    <property type="entry name" value="TOPRIM_dom"/>
</dbReference>
<dbReference type="NCBIfam" id="NF003108">
    <property type="entry name" value="PRK04031.1-1"/>
    <property type="match status" value="1"/>
</dbReference>
<dbReference type="PANTHER" id="PTHR30313">
    <property type="entry name" value="DNA PRIMASE"/>
    <property type="match status" value="1"/>
</dbReference>
<dbReference type="PANTHER" id="PTHR30313:SF2">
    <property type="entry name" value="DNA PRIMASE"/>
    <property type="match status" value="1"/>
</dbReference>
<dbReference type="Pfam" id="PF13662">
    <property type="entry name" value="Toprim_4"/>
    <property type="match status" value="1"/>
</dbReference>
<dbReference type="SMART" id="SM00493">
    <property type="entry name" value="TOPRIM"/>
    <property type="match status" value="1"/>
</dbReference>
<dbReference type="SUPFAM" id="SSF56731">
    <property type="entry name" value="DNA primase core"/>
    <property type="match status" value="1"/>
</dbReference>
<dbReference type="PROSITE" id="PS50880">
    <property type="entry name" value="TOPRIM"/>
    <property type="match status" value="1"/>
</dbReference>
<comment type="function">
    <text evidence="1">RNA polymerase that catalyzes the synthesis of short RNA molecules used as primers for DNA polymerase during DNA replication. Also part of the exosome, which is a complex involved in RNA degradation. Acts as a poly(A)-binding protein that enhances the interaction between heteromeric, adenine-rich transcripts and the exosome.</text>
</comment>
<comment type="catalytic activity">
    <reaction evidence="1">
        <text>ssDNA + n NTP = ssDNA/pppN(pN)n-1 hybrid + (n-1) diphosphate.</text>
        <dbReference type="EC" id="2.7.7.101"/>
    </reaction>
</comment>
<comment type="cofactor">
    <cofactor evidence="1">
        <name>Mg(2+)</name>
        <dbReference type="ChEBI" id="CHEBI:18420"/>
    </cofactor>
    <text evidence="1">Binds two Mg(2+) per subunit.</text>
</comment>
<comment type="subunit">
    <text evidence="1">Forms a ternary complex with MCM helicase and DNA. Component of the archaeal exosome complex.</text>
</comment>
<comment type="similarity">
    <text evidence="1">Belongs to the archaeal DnaG primase family.</text>
</comment>
<organism>
    <name type="scientific">Thermoplasma volcanium (strain ATCC 51530 / DSM 4299 / JCM 9571 / NBRC 15438 / GSS1)</name>
    <dbReference type="NCBI Taxonomy" id="273116"/>
    <lineage>
        <taxon>Archaea</taxon>
        <taxon>Methanobacteriati</taxon>
        <taxon>Thermoplasmatota</taxon>
        <taxon>Thermoplasmata</taxon>
        <taxon>Thermoplasmatales</taxon>
        <taxon>Thermoplasmataceae</taxon>
        <taxon>Thermoplasma</taxon>
    </lineage>
</organism>
<evidence type="ECO:0000255" key="1">
    <source>
        <dbReference type="HAMAP-Rule" id="MF_00007"/>
    </source>
</evidence>
<protein>
    <recommendedName>
        <fullName evidence="1">DNA primase DnaG</fullName>
        <ecNumber evidence="1">2.7.7.101</ecNumber>
    </recommendedName>
</protein>